<sequence>MAQKKGGGSTRNGRDSESKRLGVKVFGGQAINAGGIIIRQRGTRVHAGDNVGVGKDHTLFALVDGHVQFAVKGPAKKQQVSVVPAA</sequence>
<gene>
    <name evidence="1" type="primary">rpmA</name>
    <name type="ordered locus">H16_A3251</name>
</gene>
<reference key="1">
    <citation type="journal article" date="2006" name="Nat. Biotechnol.">
        <title>Genome sequence of the bioplastic-producing 'Knallgas' bacterium Ralstonia eutropha H16.</title>
        <authorList>
            <person name="Pohlmann A."/>
            <person name="Fricke W.F."/>
            <person name="Reinecke F."/>
            <person name="Kusian B."/>
            <person name="Liesegang H."/>
            <person name="Cramm R."/>
            <person name="Eitinger T."/>
            <person name="Ewering C."/>
            <person name="Poetter M."/>
            <person name="Schwartz E."/>
            <person name="Strittmatter A."/>
            <person name="Voss I."/>
            <person name="Gottschalk G."/>
            <person name="Steinbuechel A."/>
            <person name="Friedrich B."/>
            <person name="Bowien B."/>
        </authorList>
    </citation>
    <scope>NUCLEOTIDE SEQUENCE [LARGE SCALE GENOMIC DNA]</scope>
    <source>
        <strain>ATCC 17699 / DSM 428 / KCTC 22496 / NCIMB 10442 / H16 / Stanier 337</strain>
    </source>
</reference>
<organism>
    <name type="scientific">Cupriavidus necator (strain ATCC 17699 / DSM 428 / KCTC 22496 / NCIMB 10442 / H16 / Stanier 337)</name>
    <name type="common">Ralstonia eutropha</name>
    <dbReference type="NCBI Taxonomy" id="381666"/>
    <lineage>
        <taxon>Bacteria</taxon>
        <taxon>Pseudomonadati</taxon>
        <taxon>Pseudomonadota</taxon>
        <taxon>Betaproteobacteria</taxon>
        <taxon>Burkholderiales</taxon>
        <taxon>Burkholderiaceae</taxon>
        <taxon>Cupriavidus</taxon>
    </lineage>
</organism>
<protein>
    <recommendedName>
        <fullName evidence="1">Large ribosomal subunit protein bL27</fullName>
    </recommendedName>
    <alternativeName>
        <fullName evidence="3">50S ribosomal protein L27</fullName>
    </alternativeName>
</protein>
<comment type="similarity">
    <text evidence="1">Belongs to the bacterial ribosomal protein bL27 family.</text>
</comment>
<feature type="chain" id="PRO_1000017570" description="Large ribosomal subunit protein bL27">
    <location>
        <begin position="1"/>
        <end position="86"/>
    </location>
</feature>
<feature type="region of interest" description="Disordered" evidence="2">
    <location>
        <begin position="1"/>
        <end position="21"/>
    </location>
</feature>
<feature type="compositionally biased region" description="Gly residues" evidence="2">
    <location>
        <begin position="1"/>
        <end position="10"/>
    </location>
</feature>
<keyword id="KW-1185">Reference proteome</keyword>
<keyword id="KW-0687">Ribonucleoprotein</keyword>
<keyword id="KW-0689">Ribosomal protein</keyword>
<dbReference type="EMBL" id="AM260479">
    <property type="protein sequence ID" value="CAJ94326.1"/>
    <property type="molecule type" value="Genomic_DNA"/>
</dbReference>
<dbReference type="RefSeq" id="WP_010814747.1">
    <property type="nucleotide sequence ID" value="NZ_CP039287.1"/>
</dbReference>
<dbReference type="SMR" id="Q0K6P5"/>
<dbReference type="STRING" id="381666.H16_A3251"/>
<dbReference type="GeneID" id="34310312"/>
<dbReference type="KEGG" id="reh:H16_A3251"/>
<dbReference type="eggNOG" id="COG0211">
    <property type="taxonomic scope" value="Bacteria"/>
</dbReference>
<dbReference type="HOGENOM" id="CLU_095424_4_1_4"/>
<dbReference type="OrthoDB" id="9803474at2"/>
<dbReference type="Proteomes" id="UP000008210">
    <property type="component" value="Chromosome 1"/>
</dbReference>
<dbReference type="GO" id="GO:0022625">
    <property type="term" value="C:cytosolic large ribosomal subunit"/>
    <property type="evidence" value="ECO:0007669"/>
    <property type="project" value="TreeGrafter"/>
</dbReference>
<dbReference type="GO" id="GO:0003735">
    <property type="term" value="F:structural constituent of ribosome"/>
    <property type="evidence" value="ECO:0007669"/>
    <property type="project" value="InterPro"/>
</dbReference>
<dbReference type="GO" id="GO:0006412">
    <property type="term" value="P:translation"/>
    <property type="evidence" value="ECO:0007669"/>
    <property type="project" value="UniProtKB-UniRule"/>
</dbReference>
<dbReference type="FunFam" id="2.40.50.100:FF:000001">
    <property type="entry name" value="50S ribosomal protein L27"/>
    <property type="match status" value="1"/>
</dbReference>
<dbReference type="Gene3D" id="2.40.50.100">
    <property type="match status" value="1"/>
</dbReference>
<dbReference type="HAMAP" id="MF_00539">
    <property type="entry name" value="Ribosomal_bL27"/>
    <property type="match status" value="1"/>
</dbReference>
<dbReference type="InterPro" id="IPR001684">
    <property type="entry name" value="Ribosomal_bL27"/>
</dbReference>
<dbReference type="InterPro" id="IPR018261">
    <property type="entry name" value="Ribosomal_bL27_CS"/>
</dbReference>
<dbReference type="NCBIfam" id="TIGR00062">
    <property type="entry name" value="L27"/>
    <property type="match status" value="1"/>
</dbReference>
<dbReference type="PANTHER" id="PTHR15893:SF0">
    <property type="entry name" value="LARGE RIBOSOMAL SUBUNIT PROTEIN BL27M"/>
    <property type="match status" value="1"/>
</dbReference>
<dbReference type="PANTHER" id="PTHR15893">
    <property type="entry name" value="RIBOSOMAL PROTEIN L27"/>
    <property type="match status" value="1"/>
</dbReference>
<dbReference type="Pfam" id="PF01016">
    <property type="entry name" value="Ribosomal_L27"/>
    <property type="match status" value="1"/>
</dbReference>
<dbReference type="PRINTS" id="PR00063">
    <property type="entry name" value="RIBOSOMALL27"/>
</dbReference>
<dbReference type="SUPFAM" id="SSF110324">
    <property type="entry name" value="Ribosomal L27 protein-like"/>
    <property type="match status" value="1"/>
</dbReference>
<dbReference type="PROSITE" id="PS00831">
    <property type="entry name" value="RIBOSOMAL_L27"/>
    <property type="match status" value="1"/>
</dbReference>
<name>RL27_CUPNH</name>
<accession>Q0K6P5</accession>
<proteinExistence type="inferred from homology"/>
<evidence type="ECO:0000255" key="1">
    <source>
        <dbReference type="HAMAP-Rule" id="MF_00539"/>
    </source>
</evidence>
<evidence type="ECO:0000256" key="2">
    <source>
        <dbReference type="SAM" id="MobiDB-lite"/>
    </source>
</evidence>
<evidence type="ECO:0000305" key="3"/>